<organism>
    <name type="scientific">Bacillus velezensis (strain DSM 23117 / BGSC 10A6 / LMG 26770 / FZB42)</name>
    <name type="common">Bacillus amyloliquefaciens subsp. plantarum</name>
    <dbReference type="NCBI Taxonomy" id="326423"/>
    <lineage>
        <taxon>Bacteria</taxon>
        <taxon>Bacillati</taxon>
        <taxon>Bacillota</taxon>
        <taxon>Bacilli</taxon>
        <taxon>Bacillales</taxon>
        <taxon>Bacillaceae</taxon>
        <taxon>Bacillus</taxon>
        <taxon>Bacillus amyloliquefaciens group</taxon>
    </lineage>
</organism>
<reference key="1">
    <citation type="journal article" date="2007" name="Nat. Biotechnol.">
        <title>Comparative analysis of the complete genome sequence of the plant growth-promoting bacterium Bacillus amyloliquefaciens FZB42.</title>
        <authorList>
            <person name="Chen X.H."/>
            <person name="Koumoutsi A."/>
            <person name="Scholz R."/>
            <person name="Eisenreich A."/>
            <person name="Schneider K."/>
            <person name="Heinemeyer I."/>
            <person name="Morgenstern B."/>
            <person name="Voss B."/>
            <person name="Hess W.R."/>
            <person name="Reva O."/>
            <person name="Junge H."/>
            <person name="Voigt B."/>
            <person name="Jungblut P.R."/>
            <person name="Vater J."/>
            <person name="Suessmuth R."/>
            <person name="Liesegang H."/>
            <person name="Strittmatter A."/>
            <person name="Gottschalk G."/>
            <person name="Borriss R."/>
        </authorList>
    </citation>
    <scope>NUCLEOTIDE SEQUENCE [LARGE SCALE GENOMIC DNA]</scope>
    <source>
        <strain>DSM 23117 / BGSC 10A6 / LMG 26770 / FZB42</strain>
    </source>
</reference>
<name>SECA_BACVZ</name>
<evidence type="ECO:0000255" key="1">
    <source>
        <dbReference type="HAMAP-Rule" id="MF_01382"/>
    </source>
</evidence>
<evidence type="ECO:0000256" key="2">
    <source>
        <dbReference type="SAM" id="MobiDB-lite"/>
    </source>
</evidence>
<sequence>MLGILNKMFDPTKRALNKYEKIANDIDAVRGDYENLSDEALKHKTAEFKERLEKGETTDDLLVEAFAVVREASRRVTGMFPFKVQLMGGIALHEGNISEMKTGEGKTLTSTLPVYLNALTGKGVHVVTVNEYLASRDAQQMGEIFAFLGLTVGLNLNSMSKDEKREAYAADITYSTNNELGFDYLRDNMVLYKEQMVQRPLHFAVIDEVDSILVDEARTPLIISGQAQKSTKLYVQANAFVRTLKKDQDYTYDVKTKGVQLTEEGMTKAEKTFGIDNLFDVKNVALNHHINQALKAHAAMQKDVDYVVEDGQVVIVDSFTGRLMKGRRYSEGLHQAIEAKEGLEIQNESMTLATITFQNYFRMYEKLAGMTGTAKTEEEEFRNIYNMQVVSIPTNQPVIRDDRPDLIYRSMEGKFKAVAEDVAQRYMTGQPVLVGTVAVETSELISKLLKNKGIPHQVLNAKNHEREAQIIEEAGQKGAVTIATNMAGRGTDIKLGEGVKELGGLAVVGTERHESRRIDNQLRGRSGRQGDPGITQFYLSMEDELMRRFGAERTMAMLDRFGMDDSTPIQSKMVSRAVESSQKRVEGNNFDSRKQLLQYDDVLRQQREVIYKQRFEVIDSENLRDIVEGMIKSSLERAIAAYTPKEELPEEWNLDGLVELVNSTYLDEGALEKSDIFGKEPDEMHEMIMDRIMTKYNEKEENFGTEQMREFEKVIVLRAVDSKWMDHIDAMDQLRQGIHLRAYAQTNPLREYQMEGFAMFEHMIESIEDEVAKFVMKAEIESNLEREEVVQGQTTAHQPQDGDEAKQAKKAPVRKVVDIGRNAPCHCGSGKKYKNCCGRTE</sequence>
<gene>
    <name evidence="1" type="primary">secA</name>
    <name type="ordered locus">RBAM_032450</name>
</gene>
<dbReference type="EC" id="7.4.2.8" evidence="1"/>
<dbReference type="EMBL" id="CP000560">
    <property type="protein sequence ID" value="ABS75575.1"/>
    <property type="molecule type" value="Genomic_DNA"/>
</dbReference>
<dbReference type="RefSeq" id="WP_007407469.1">
    <property type="nucleotide sequence ID" value="NC_009725.2"/>
</dbReference>
<dbReference type="SMR" id="A7Z999"/>
<dbReference type="GeneID" id="93082390"/>
<dbReference type="KEGG" id="bay:RBAM_032450"/>
<dbReference type="HOGENOM" id="CLU_005314_3_0_9"/>
<dbReference type="Proteomes" id="UP000001120">
    <property type="component" value="Chromosome"/>
</dbReference>
<dbReference type="GO" id="GO:0031522">
    <property type="term" value="C:cell envelope Sec protein transport complex"/>
    <property type="evidence" value="ECO:0007669"/>
    <property type="project" value="TreeGrafter"/>
</dbReference>
<dbReference type="GO" id="GO:0005829">
    <property type="term" value="C:cytosol"/>
    <property type="evidence" value="ECO:0007669"/>
    <property type="project" value="TreeGrafter"/>
</dbReference>
<dbReference type="GO" id="GO:0005886">
    <property type="term" value="C:plasma membrane"/>
    <property type="evidence" value="ECO:0007669"/>
    <property type="project" value="UniProtKB-SubCell"/>
</dbReference>
<dbReference type="GO" id="GO:0005524">
    <property type="term" value="F:ATP binding"/>
    <property type="evidence" value="ECO:0007669"/>
    <property type="project" value="UniProtKB-UniRule"/>
</dbReference>
<dbReference type="GO" id="GO:0046872">
    <property type="term" value="F:metal ion binding"/>
    <property type="evidence" value="ECO:0007669"/>
    <property type="project" value="UniProtKB-KW"/>
</dbReference>
<dbReference type="GO" id="GO:0008564">
    <property type="term" value="F:protein-exporting ATPase activity"/>
    <property type="evidence" value="ECO:0007669"/>
    <property type="project" value="UniProtKB-EC"/>
</dbReference>
<dbReference type="GO" id="GO:0065002">
    <property type="term" value="P:intracellular protein transmembrane transport"/>
    <property type="evidence" value="ECO:0007669"/>
    <property type="project" value="UniProtKB-UniRule"/>
</dbReference>
<dbReference type="GO" id="GO:0017038">
    <property type="term" value="P:protein import"/>
    <property type="evidence" value="ECO:0007669"/>
    <property type="project" value="InterPro"/>
</dbReference>
<dbReference type="GO" id="GO:0006605">
    <property type="term" value="P:protein targeting"/>
    <property type="evidence" value="ECO:0007669"/>
    <property type="project" value="UniProtKB-UniRule"/>
</dbReference>
<dbReference type="GO" id="GO:0043952">
    <property type="term" value="P:protein transport by the Sec complex"/>
    <property type="evidence" value="ECO:0007669"/>
    <property type="project" value="TreeGrafter"/>
</dbReference>
<dbReference type="CDD" id="cd17928">
    <property type="entry name" value="DEXDc_SecA"/>
    <property type="match status" value="1"/>
</dbReference>
<dbReference type="CDD" id="cd18803">
    <property type="entry name" value="SF2_C_secA"/>
    <property type="match status" value="1"/>
</dbReference>
<dbReference type="FunFam" id="1.10.3060.10:FF:000002">
    <property type="entry name" value="Preprotein translocase subunit SecA"/>
    <property type="match status" value="1"/>
</dbReference>
<dbReference type="FunFam" id="3.40.50.300:FF:000081">
    <property type="entry name" value="Preprotein translocase subunit SecA"/>
    <property type="match status" value="1"/>
</dbReference>
<dbReference type="FunFam" id="3.40.50.300:FF:000429">
    <property type="entry name" value="Preprotein translocase subunit SecA"/>
    <property type="match status" value="1"/>
</dbReference>
<dbReference type="FunFam" id="3.90.1440.10:FF:000001">
    <property type="entry name" value="Preprotein translocase subunit SecA"/>
    <property type="match status" value="1"/>
</dbReference>
<dbReference type="Gene3D" id="1.10.3060.10">
    <property type="entry name" value="Helical scaffold and wing domains of SecA"/>
    <property type="match status" value="1"/>
</dbReference>
<dbReference type="Gene3D" id="3.40.50.300">
    <property type="entry name" value="P-loop containing nucleotide triphosphate hydrolases"/>
    <property type="match status" value="3"/>
</dbReference>
<dbReference type="Gene3D" id="3.90.1440.10">
    <property type="entry name" value="SecA, preprotein cross-linking domain"/>
    <property type="match status" value="1"/>
</dbReference>
<dbReference type="HAMAP" id="MF_01382">
    <property type="entry name" value="SecA"/>
    <property type="match status" value="1"/>
</dbReference>
<dbReference type="InterPro" id="IPR014001">
    <property type="entry name" value="Helicase_ATP-bd"/>
</dbReference>
<dbReference type="InterPro" id="IPR001650">
    <property type="entry name" value="Helicase_C-like"/>
</dbReference>
<dbReference type="InterPro" id="IPR027417">
    <property type="entry name" value="P-loop_NTPase"/>
</dbReference>
<dbReference type="InterPro" id="IPR004027">
    <property type="entry name" value="SEC_C_motif"/>
</dbReference>
<dbReference type="InterPro" id="IPR000185">
    <property type="entry name" value="SecA"/>
</dbReference>
<dbReference type="InterPro" id="IPR020937">
    <property type="entry name" value="SecA_CS"/>
</dbReference>
<dbReference type="InterPro" id="IPR011115">
    <property type="entry name" value="SecA_DEAD"/>
</dbReference>
<dbReference type="InterPro" id="IPR014018">
    <property type="entry name" value="SecA_motor_DEAD"/>
</dbReference>
<dbReference type="InterPro" id="IPR011130">
    <property type="entry name" value="SecA_preprotein_X-link_dom"/>
</dbReference>
<dbReference type="InterPro" id="IPR044722">
    <property type="entry name" value="SecA_SF2_C"/>
</dbReference>
<dbReference type="InterPro" id="IPR011116">
    <property type="entry name" value="SecA_Wing/Scaffold"/>
</dbReference>
<dbReference type="InterPro" id="IPR036266">
    <property type="entry name" value="SecA_Wing/Scaffold_sf"/>
</dbReference>
<dbReference type="InterPro" id="IPR036670">
    <property type="entry name" value="SecA_X-link_sf"/>
</dbReference>
<dbReference type="NCBIfam" id="NF006630">
    <property type="entry name" value="PRK09200.1"/>
    <property type="match status" value="1"/>
</dbReference>
<dbReference type="NCBIfam" id="NF009538">
    <property type="entry name" value="PRK12904.1"/>
    <property type="match status" value="1"/>
</dbReference>
<dbReference type="NCBIfam" id="TIGR00963">
    <property type="entry name" value="secA"/>
    <property type="match status" value="1"/>
</dbReference>
<dbReference type="PANTHER" id="PTHR30612:SF0">
    <property type="entry name" value="CHLOROPLAST PROTEIN-TRANSPORTING ATPASE"/>
    <property type="match status" value="1"/>
</dbReference>
<dbReference type="PANTHER" id="PTHR30612">
    <property type="entry name" value="SECA INNER MEMBRANE COMPONENT OF SEC PROTEIN SECRETION SYSTEM"/>
    <property type="match status" value="1"/>
</dbReference>
<dbReference type="Pfam" id="PF21090">
    <property type="entry name" value="P-loop_SecA"/>
    <property type="match status" value="1"/>
</dbReference>
<dbReference type="Pfam" id="PF02810">
    <property type="entry name" value="SEC-C"/>
    <property type="match status" value="1"/>
</dbReference>
<dbReference type="Pfam" id="PF07517">
    <property type="entry name" value="SecA_DEAD"/>
    <property type="match status" value="1"/>
</dbReference>
<dbReference type="Pfam" id="PF01043">
    <property type="entry name" value="SecA_PP_bind"/>
    <property type="match status" value="1"/>
</dbReference>
<dbReference type="Pfam" id="PF07516">
    <property type="entry name" value="SecA_SW"/>
    <property type="match status" value="1"/>
</dbReference>
<dbReference type="PRINTS" id="PR00906">
    <property type="entry name" value="SECA"/>
</dbReference>
<dbReference type="SMART" id="SM00957">
    <property type="entry name" value="SecA_DEAD"/>
    <property type="match status" value="1"/>
</dbReference>
<dbReference type="SMART" id="SM00958">
    <property type="entry name" value="SecA_PP_bind"/>
    <property type="match status" value="1"/>
</dbReference>
<dbReference type="SUPFAM" id="SSF81886">
    <property type="entry name" value="Helical scaffold and wing domains of SecA"/>
    <property type="match status" value="1"/>
</dbReference>
<dbReference type="SUPFAM" id="SSF52540">
    <property type="entry name" value="P-loop containing nucleoside triphosphate hydrolases"/>
    <property type="match status" value="2"/>
</dbReference>
<dbReference type="SUPFAM" id="SSF81767">
    <property type="entry name" value="Pre-protein crosslinking domain of SecA"/>
    <property type="match status" value="1"/>
</dbReference>
<dbReference type="PROSITE" id="PS01312">
    <property type="entry name" value="SECA"/>
    <property type="match status" value="1"/>
</dbReference>
<dbReference type="PROSITE" id="PS51196">
    <property type="entry name" value="SECA_MOTOR_DEAD"/>
    <property type="match status" value="1"/>
</dbReference>
<protein>
    <recommendedName>
        <fullName evidence="1">Protein translocase subunit SecA</fullName>
        <ecNumber evidence="1">7.4.2.8</ecNumber>
    </recommendedName>
</protein>
<keyword id="KW-0067">ATP-binding</keyword>
<keyword id="KW-1003">Cell membrane</keyword>
<keyword id="KW-0963">Cytoplasm</keyword>
<keyword id="KW-0472">Membrane</keyword>
<keyword id="KW-0479">Metal-binding</keyword>
<keyword id="KW-0547">Nucleotide-binding</keyword>
<keyword id="KW-0653">Protein transport</keyword>
<keyword id="KW-1278">Translocase</keyword>
<keyword id="KW-0811">Translocation</keyword>
<keyword id="KW-0813">Transport</keyword>
<keyword id="KW-0862">Zinc</keyword>
<proteinExistence type="inferred from homology"/>
<accession>A7Z999</accession>
<comment type="function">
    <text evidence="1">Part of the Sec protein translocase complex. Interacts with the SecYEG preprotein conducting channel. Has a central role in coupling the hydrolysis of ATP to the transfer of proteins into and across the cell membrane, serving as an ATP-driven molecular motor driving the stepwise translocation of polypeptide chains across the membrane.</text>
</comment>
<comment type="catalytic activity">
    <reaction evidence="1">
        <text>ATP + H2O + cellular proteinSide 1 = ADP + phosphate + cellular proteinSide 2.</text>
        <dbReference type="EC" id="7.4.2.8"/>
    </reaction>
</comment>
<comment type="cofactor">
    <cofactor evidence="1">
        <name>Zn(2+)</name>
        <dbReference type="ChEBI" id="CHEBI:29105"/>
    </cofactor>
    <text evidence="1">May bind 1 zinc ion per subunit.</text>
</comment>
<comment type="subunit">
    <text evidence="1">Monomer and homodimer. Part of the essential Sec protein translocation apparatus which comprises SecA, SecYEG and auxiliary proteins SecDF. Other proteins may also be involved.</text>
</comment>
<comment type="subcellular location">
    <subcellularLocation>
        <location evidence="1">Cell membrane</location>
        <topology evidence="1">Peripheral membrane protein</topology>
        <orientation evidence="1">Cytoplasmic side</orientation>
    </subcellularLocation>
    <subcellularLocation>
        <location evidence="1">Cytoplasm</location>
    </subcellularLocation>
    <text evidence="1">Distribution is 50-50.</text>
</comment>
<comment type="similarity">
    <text evidence="1">Belongs to the SecA family.</text>
</comment>
<feature type="chain" id="PRO_0000318309" description="Protein translocase subunit SecA">
    <location>
        <begin position="1"/>
        <end position="841"/>
    </location>
</feature>
<feature type="region of interest" description="Disordered" evidence="2">
    <location>
        <begin position="786"/>
        <end position="812"/>
    </location>
</feature>
<feature type="binding site" evidence="1">
    <location>
        <position position="85"/>
    </location>
    <ligand>
        <name>ATP</name>
        <dbReference type="ChEBI" id="CHEBI:30616"/>
    </ligand>
</feature>
<feature type="binding site" evidence="1">
    <location>
        <begin position="103"/>
        <end position="107"/>
    </location>
    <ligand>
        <name>ATP</name>
        <dbReference type="ChEBI" id="CHEBI:30616"/>
    </ligand>
</feature>
<feature type="binding site" evidence="1">
    <location>
        <position position="492"/>
    </location>
    <ligand>
        <name>ATP</name>
        <dbReference type="ChEBI" id="CHEBI:30616"/>
    </ligand>
</feature>
<feature type="binding site" evidence="1">
    <location>
        <position position="825"/>
    </location>
    <ligand>
        <name>Zn(2+)</name>
        <dbReference type="ChEBI" id="CHEBI:29105"/>
    </ligand>
</feature>
<feature type="binding site" evidence="1">
    <location>
        <position position="827"/>
    </location>
    <ligand>
        <name>Zn(2+)</name>
        <dbReference type="ChEBI" id="CHEBI:29105"/>
    </ligand>
</feature>
<feature type="binding site" evidence="1">
    <location>
        <position position="836"/>
    </location>
    <ligand>
        <name>Zn(2+)</name>
        <dbReference type="ChEBI" id="CHEBI:29105"/>
    </ligand>
</feature>
<feature type="binding site" evidence="1">
    <location>
        <position position="837"/>
    </location>
    <ligand>
        <name>Zn(2+)</name>
        <dbReference type="ChEBI" id="CHEBI:29105"/>
    </ligand>
</feature>